<evidence type="ECO:0000255" key="1">
    <source>
        <dbReference type="PROSITE-ProRule" id="PRU00541"/>
    </source>
</evidence>
<evidence type="ECO:0000255" key="2">
    <source>
        <dbReference type="PROSITE-ProRule" id="PRU00542"/>
    </source>
</evidence>
<evidence type="ECO:0000256" key="3">
    <source>
        <dbReference type="SAM" id="MobiDB-lite"/>
    </source>
</evidence>
<evidence type="ECO:0000269" key="4">
    <source>
    </source>
</evidence>
<evidence type="ECO:0000305" key="5"/>
<gene>
    <name type="primary">YRF1-1</name>
    <name type="ordered locus">YDR545W</name>
    <name type="ORF">D3703.4</name>
</gene>
<feature type="chain" id="PRO_0000102201" description="Y' element ATP-dependent helicase protein 1 copy 1">
    <location>
        <begin position="1"/>
        <end position="1796"/>
    </location>
</feature>
<feature type="domain" description="Helicase ATP-binding" evidence="1">
    <location>
        <begin position="797"/>
        <end position="974"/>
    </location>
</feature>
<feature type="domain" description="Helicase C-terminal" evidence="2">
    <location>
        <begin position="1031"/>
        <end position="1180"/>
    </location>
</feature>
<feature type="region of interest" description="Disordered" evidence="3">
    <location>
        <begin position="743"/>
        <end position="767"/>
    </location>
</feature>
<feature type="region of interest" description="Disordered" evidence="3">
    <location>
        <begin position="1254"/>
        <end position="1278"/>
    </location>
</feature>
<feature type="region of interest" description="Disordered" evidence="3">
    <location>
        <begin position="1294"/>
        <end position="1421"/>
    </location>
</feature>
<feature type="compositionally biased region" description="Low complexity" evidence="3">
    <location>
        <begin position="1294"/>
        <end position="1397"/>
    </location>
</feature>
<feature type="compositionally biased region" description="Basic and acidic residues" evidence="3">
    <location>
        <begin position="1398"/>
        <end position="1421"/>
    </location>
</feature>
<feature type="binding site" evidence="1">
    <location>
        <begin position="810"/>
        <end position="817"/>
    </location>
    <ligand>
        <name>ATP</name>
        <dbReference type="ChEBI" id="CHEBI:30616"/>
    </ligand>
</feature>
<reference key="1">
    <citation type="journal article" date="1997" name="Nature">
        <title>The nucleotide sequence of Saccharomyces cerevisiae chromosome IV.</title>
        <authorList>
            <person name="Jacq C."/>
            <person name="Alt-Moerbe J."/>
            <person name="Andre B."/>
            <person name="Arnold W."/>
            <person name="Bahr A."/>
            <person name="Ballesta J.P.G."/>
            <person name="Bargues M."/>
            <person name="Baron L."/>
            <person name="Becker A."/>
            <person name="Biteau N."/>
            <person name="Bloecker H."/>
            <person name="Blugeon C."/>
            <person name="Boskovic J."/>
            <person name="Brandt P."/>
            <person name="Brueckner M."/>
            <person name="Buitrago M.J."/>
            <person name="Coster F."/>
            <person name="Delaveau T."/>
            <person name="del Rey F."/>
            <person name="Dujon B."/>
            <person name="Eide L.G."/>
            <person name="Garcia-Cantalejo J.M."/>
            <person name="Goffeau A."/>
            <person name="Gomez-Peris A."/>
            <person name="Granotier C."/>
            <person name="Hanemann V."/>
            <person name="Hankeln T."/>
            <person name="Hoheisel J.D."/>
            <person name="Jaeger W."/>
            <person name="Jimenez A."/>
            <person name="Jonniaux J.-L."/>
            <person name="Kraemer C."/>
            <person name="Kuester H."/>
            <person name="Laamanen P."/>
            <person name="Legros Y."/>
            <person name="Louis E.J."/>
            <person name="Moeller-Rieker S."/>
            <person name="Monnet A."/>
            <person name="Moro M."/>
            <person name="Mueller-Auer S."/>
            <person name="Nussbaumer B."/>
            <person name="Paricio N."/>
            <person name="Paulin L."/>
            <person name="Perea J."/>
            <person name="Perez-Alonso M."/>
            <person name="Perez-Ortin J.E."/>
            <person name="Pohl T.M."/>
            <person name="Prydz H."/>
            <person name="Purnelle B."/>
            <person name="Rasmussen S.W."/>
            <person name="Remacha M.A."/>
            <person name="Revuelta J.L."/>
            <person name="Rieger M."/>
            <person name="Salom D."/>
            <person name="Saluz H.P."/>
            <person name="Saiz J.E."/>
            <person name="Saren A.-M."/>
            <person name="Schaefer M."/>
            <person name="Scharfe M."/>
            <person name="Schmidt E.R."/>
            <person name="Schneider C."/>
            <person name="Scholler P."/>
            <person name="Schwarz S."/>
            <person name="Soler-Mira A."/>
            <person name="Urrestarazu L.A."/>
            <person name="Verhasselt P."/>
            <person name="Vissers S."/>
            <person name="Voet M."/>
            <person name="Volckaert G."/>
            <person name="Wagner G."/>
            <person name="Wambutt R."/>
            <person name="Wedler E."/>
            <person name="Wedler H."/>
            <person name="Woelfl S."/>
            <person name="Harris D.E."/>
            <person name="Bowman S."/>
            <person name="Brown D."/>
            <person name="Churcher C.M."/>
            <person name="Connor R."/>
            <person name="Dedman K."/>
            <person name="Gentles S."/>
            <person name="Hamlin N."/>
            <person name="Hunt S."/>
            <person name="Jones L."/>
            <person name="McDonald S."/>
            <person name="Murphy L.D."/>
            <person name="Niblett D."/>
            <person name="Odell C."/>
            <person name="Oliver K."/>
            <person name="Rajandream M.A."/>
            <person name="Richards C."/>
            <person name="Shore L."/>
            <person name="Walsh S.V."/>
            <person name="Barrell B.G."/>
            <person name="Dietrich F.S."/>
            <person name="Mulligan J.T."/>
            <person name="Allen E."/>
            <person name="Araujo R."/>
            <person name="Aviles E."/>
            <person name="Berno A."/>
            <person name="Carpenter J."/>
            <person name="Chen E."/>
            <person name="Cherry J.M."/>
            <person name="Chung E."/>
            <person name="Duncan M."/>
            <person name="Hunicke-Smith S."/>
            <person name="Hyman R.W."/>
            <person name="Komp C."/>
            <person name="Lashkari D."/>
            <person name="Lew H."/>
            <person name="Lin D."/>
            <person name="Mosedale D."/>
            <person name="Nakahara K."/>
            <person name="Namath A."/>
            <person name="Oefner P."/>
            <person name="Oh C."/>
            <person name="Petel F.X."/>
            <person name="Roberts D."/>
            <person name="Schramm S."/>
            <person name="Schroeder M."/>
            <person name="Shogren T."/>
            <person name="Shroff N."/>
            <person name="Winant A."/>
            <person name="Yelton M.A."/>
            <person name="Botstein D."/>
            <person name="Davis R.W."/>
            <person name="Johnston M."/>
            <person name="Andrews S."/>
            <person name="Brinkman R."/>
            <person name="Cooper J."/>
            <person name="Ding H."/>
            <person name="Du Z."/>
            <person name="Favello A."/>
            <person name="Fulton L."/>
            <person name="Gattung S."/>
            <person name="Greco T."/>
            <person name="Hallsworth K."/>
            <person name="Hawkins J."/>
            <person name="Hillier L.W."/>
            <person name="Jier M."/>
            <person name="Johnson D."/>
            <person name="Johnston L."/>
            <person name="Kirsten J."/>
            <person name="Kucaba T."/>
            <person name="Langston Y."/>
            <person name="Latreille P."/>
            <person name="Le T."/>
            <person name="Mardis E."/>
            <person name="Menezes S."/>
            <person name="Miller N."/>
            <person name="Nhan M."/>
            <person name="Pauley A."/>
            <person name="Peluso D."/>
            <person name="Rifkin L."/>
            <person name="Riles L."/>
            <person name="Taich A."/>
            <person name="Trevaskis E."/>
            <person name="Vignati D."/>
            <person name="Wilcox L."/>
            <person name="Wohldman P."/>
            <person name="Vaudin M."/>
            <person name="Wilson R."/>
            <person name="Waterston R."/>
            <person name="Albermann K."/>
            <person name="Hani J."/>
            <person name="Heumann K."/>
            <person name="Kleine K."/>
            <person name="Mewes H.-W."/>
            <person name="Zollner A."/>
            <person name="Zaccaria P."/>
        </authorList>
    </citation>
    <scope>NUCLEOTIDE SEQUENCE [LARGE SCALE GENOMIC DNA]</scope>
    <source>
        <strain>ATCC 204508 / S288c</strain>
    </source>
</reference>
<reference key="2">
    <citation type="journal article" date="2014" name="G3 (Bethesda)">
        <title>The reference genome sequence of Saccharomyces cerevisiae: Then and now.</title>
        <authorList>
            <person name="Engel S.R."/>
            <person name="Dietrich F.S."/>
            <person name="Fisk D.G."/>
            <person name="Binkley G."/>
            <person name="Balakrishnan R."/>
            <person name="Costanzo M.C."/>
            <person name="Dwight S.S."/>
            <person name="Hitz B.C."/>
            <person name="Karra K."/>
            <person name="Nash R.S."/>
            <person name="Weng S."/>
            <person name="Wong E.D."/>
            <person name="Lloyd P."/>
            <person name="Skrzypek M.S."/>
            <person name="Miyasato S.R."/>
            <person name="Simison M."/>
            <person name="Cherry J.M."/>
        </authorList>
    </citation>
    <scope>GENOME REANNOTATION</scope>
    <source>
        <strain>ATCC 204508 / S288c</strain>
    </source>
</reference>
<reference key="3">
    <citation type="journal article" date="1998" name="J. Biol. Chem.">
        <title>Y'-Help1, a DNA helicase encoded by the yeast subtelomeric Y' element, is induced in survivors defective for telomerase.</title>
        <authorList>
            <person name="Yamada M."/>
            <person name="Hayatsu N."/>
            <person name="Matsuura A."/>
            <person name="Ishikawa F."/>
        </authorList>
    </citation>
    <scope>FUNCTION AS A HELICASE</scope>
    <scope>INDUCTION</scope>
</reference>
<organism>
    <name type="scientific">Saccharomyces cerevisiae (strain ATCC 204508 / S288c)</name>
    <name type="common">Baker's yeast</name>
    <dbReference type="NCBI Taxonomy" id="559292"/>
    <lineage>
        <taxon>Eukaryota</taxon>
        <taxon>Fungi</taxon>
        <taxon>Dikarya</taxon>
        <taxon>Ascomycota</taxon>
        <taxon>Saccharomycotina</taxon>
        <taxon>Saccharomycetes</taxon>
        <taxon>Saccharomycetales</taxon>
        <taxon>Saccharomycetaceae</taxon>
        <taxon>Saccharomyces</taxon>
    </lineage>
</organism>
<dbReference type="EC" id="5.6.2.-" evidence="4"/>
<dbReference type="EMBL" id="Z74389">
    <property type="protein sequence ID" value="CAA98916.1"/>
    <property type="molecule type" value="Genomic_DNA"/>
</dbReference>
<dbReference type="EMBL" id="U43834">
    <property type="protein sequence ID" value="AAB64987.1"/>
    <property type="molecule type" value="Genomic_DNA"/>
</dbReference>
<dbReference type="EMBL" id="BK006938">
    <property type="protein sequence ID" value="DAA12372.1"/>
    <property type="molecule type" value="Genomic_DNA"/>
</dbReference>
<dbReference type="PIR" id="S65004">
    <property type="entry name" value="S65004"/>
</dbReference>
<dbReference type="RefSeq" id="NP_010834.1">
    <property type="nucleotide sequence ID" value="NM_001180853.1"/>
</dbReference>
<dbReference type="BioGRID" id="31723">
    <property type="interactions" value="19"/>
</dbReference>
<dbReference type="BioGRID" id="32590">
    <property type="interactions" value="32"/>
</dbReference>
<dbReference type="BioGRID" id="34775">
    <property type="interactions" value="4"/>
</dbReference>
<dbReference type="FunCoup" id="P0CX20">
    <property type="interactions" value="96"/>
</dbReference>
<dbReference type="STRING" id="4932.YDR545W"/>
<dbReference type="iPTMnet" id="P0CX20"/>
<dbReference type="PaxDb" id="4932-YDR545W"/>
<dbReference type="PeptideAtlas" id="P0CX20"/>
<dbReference type="EnsemblFungi" id="YDR545W_mRNA">
    <property type="protein sequence ID" value="YDR545W"/>
    <property type="gene ID" value="YDR545W"/>
</dbReference>
<dbReference type="EnsemblFungi" id="YLR467W_mRNA">
    <property type="protein sequence ID" value="YLR467W"/>
    <property type="gene ID" value="YLR467W"/>
</dbReference>
<dbReference type="EnsemblFungi" id="YOR396W_mRNA">
    <property type="protein sequence ID" value="YOR396W"/>
    <property type="gene ID" value="YOR396W"/>
</dbReference>
<dbReference type="GeneID" id="852158"/>
<dbReference type="KEGG" id="sce:YDR545W"/>
<dbReference type="KEGG" id="sce:YLR467W"/>
<dbReference type="KEGG" id="sce:YOR396W"/>
<dbReference type="AGR" id="SGD:S000002953"/>
<dbReference type="SGD" id="S000002953">
    <property type="gene designation" value="YRF1-1"/>
</dbReference>
<dbReference type="VEuPathDB" id="FungiDB:YDR545W"/>
<dbReference type="VEuPathDB" id="FungiDB:YLR467W"/>
<dbReference type="VEuPathDB" id="FungiDB:YOR396W"/>
<dbReference type="eggNOG" id="ENOG502QWCT">
    <property type="taxonomic scope" value="Eukaryota"/>
</dbReference>
<dbReference type="HOGENOM" id="CLU_003044_2_0_1"/>
<dbReference type="InParanoid" id="P0CX20"/>
<dbReference type="OrthoDB" id="4070089at2759"/>
<dbReference type="BioCyc" id="YEAST:G3O-30051-MONOMER"/>
<dbReference type="Reactome" id="R-SCE-5689880">
    <property type="pathway name" value="Ub-specific processing proteases"/>
</dbReference>
<dbReference type="PRO" id="PR:P0CX20"/>
<dbReference type="Proteomes" id="UP000002311">
    <property type="component" value="Chromosome IV"/>
</dbReference>
<dbReference type="RNAct" id="P0CX20">
    <property type="molecule type" value="protein"/>
</dbReference>
<dbReference type="ExpressionAtlas" id="P0CX20">
    <property type="expression patterns" value="baseline and differential"/>
</dbReference>
<dbReference type="GO" id="GO:0005737">
    <property type="term" value="C:cytoplasm"/>
    <property type="evidence" value="ECO:0000318"/>
    <property type="project" value="GO_Central"/>
</dbReference>
<dbReference type="GO" id="GO:0005634">
    <property type="term" value="C:nucleus"/>
    <property type="evidence" value="ECO:0000305"/>
    <property type="project" value="SGD"/>
</dbReference>
<dbReference type="GO" id="GO:0005524">
    <property type="term" value="F:ATP binding"/>
    <property type="evidence" value="ECO:0007669"/>
    <property type="project" value="UniProtKB-KW"/>
</dbReference>
<dbReference type="GO" id="GO:0016887">
    <property type="term" value="F:ATP hydrolysis activity"/>
    <property type="evidence" value="ECO:0007669"/>
    <property type="project" value="RHEA"/>
</dbReference>
<dbReference type="GO" id="GO:0003678">
    <property type="term" value="F:DNA helicase activity"/>
    <property type="evidence" value="ECO:0000314"/>
    <property type="project" value="SGD"/>
</dbReference>
<dbReference type="GO" id="GO:0003676">
    <property type="term" value="F:nucleic acid binding"/>
    <property type="evidence" value="ECO:0007669"/>
    <property type="project" value="InterPro"/>
</dbReference>
<dbReference type="GO" id="GO:0000722">
    <property type="term" value="P:telomere maintenance via recombination"/>
    <property type="evidence" value="ECO:0000316"/>
    <property type="project" value="SGD"/>
</dbReference>
<dbReference type="FunFam" id="3.40.50.300:FF:001914">
    <property type="entry name" value="YML133C-like protein"/>
    <property type="match status" value="1"/>
</dbReference>
<dbReference type="FunFam" id="3.40.50.300:FF:002410">
    <property type="entry name" value="YML133C-like protein"/>
    <property type="match status" value="1"/>
</dbReference>
<dbReference type="Gene3D" id="3.40.50.300">
    <property type="entry name" value="P-loop containing nucleotide triphosphate hydrolases"/>
    <property type="match status" value="1"/>
</dbReference>
<dbReference type="InterPro" id="IPR011545">
    <property type="entry name" value="DEAD/DEAH_box_helicase_dom"/>
</dbReference>
<dbReference type="InterPro" id="IPR014001">
    <property type="entry name" value="Helicase_ATP-bd"/>
</dbReference>
<dbReference type="InterPro" id="IPR001650">
    <property type="entry name" value="Helicase_C-like"/>
</dbReference>
<dbReference type="InterPro" id="IPR027417">
    <property type="entry name" value="P-loop_NTPase"/>
</dbReference>
<dbReference type="InterPro" id="IPR021646">
    <property type="entry name" value="Sir1_ORC-binding"/>
</dbReference>
<dbReference type="InterPro" id="IPR050978">
    <property type="entry name" value="Y'_ATP-dependent_helicase"/>
</dbReference>
<dbReference type="PANTHER" id="PTHR31583">
    <property type="match status" value="1"/>
</dbReference>
<dbReference type="PANTHER" id="PTHR31583:SF2">
    <property type="match status" value="1"/>
</dbReference>
<dbReference type="Pfam" id="PF00270">
    <property type="entry name" value="DEAD"/>
    <property type="match status" value="1"/>
</dbReference>
<dbReference type="Pfam" id="PF00271">
    <property type="entry name" value="Helicase_C"/>
    <property type="match status" value="1"/>
</dbReference>
<dbReference type="Pfam" id="PF11603">
    <property type="entry name" value="Sir1"/>
    <property type="match status" value="1"/>
</dbReference>
<dbReference type="SMART" id="SM00487">
    <property type="entry name" value="DEXDc"/>
    <property type="match status" value="1"/>
</dbReference>
<dbReference type="SMART" id="SM00490">
    <property type="entry name" value="HELICc"/>
    <property type="match status" value="1"/>
</dbReference>
<dbReference type="SUPFAM" id="SSF52540">
    <property type="entry name" value="P-loop containing nucleoside triphosphate hydrolases"/>
    <property type="match status" value="1"/>
</dbReference>
<dbReference type="PROSITE" id="PS51192">
    <property type="entry name" value="HELICASE_ATP_BIND_1"/>
    <property type="match status" value="1"/>
</dbReference>
<dbReference type="PROSITE" id="PS51194">
    <property type="entry name" value="HELICASE_CTER"/>
    <property type="match status" value="1"/>
</dbReference>
<keyword id="KW-0067">ATP-binding</keyword>
<keyword id="KW-0347">Helicase</keyword>
<keyword id="KW-0378">Hydrolase</keyword>
<keyword id="KW-0413">Isomerase</keyword>
<keyword id="KW-0547">Nucleotide-binding</keyword>
<keyword id="KW-1185">Reference proteome</keyword>
<keyword id="KW-0677">Repeat</keyword>
<comment type="function">
    <text evidence="4">Catalyzes DNA unwinding and is involved in telomerase-independent telomere maintenance.</text>
</comment>
<comment type="induction">
    <text evidence="4">Induced in absence of telomerase TLC1.</text>
</comment>
<comment type="miscellaneous">
    <text evidence="4">The protein tested in (PubMed:9837911) started on residue 800; there are 4 identical proteins in yeast.</text>
</comment>
<comment type="similarity">
    <text evidence="5">Belongs to the helicase family. Yeast subtelomeric Y' repeat subfamily.</text>
</comment>
<sequence>MKVSDRRKFEKANFDEFESALNNKNDLVHCPSITLFESIPTEVRSFYEDEKSGLIKVVKFRTGAMDRKRSFEKIVISVMVGKNVQKFLTFVEDEPDFQGGPIPSKYLIPKKINLMVYTLFQVHTLKFNRKDYDTLSLFYLNRGYYNELSFRVLERCHEIASARPNDSSTMRTFTDFVSGAPIVRSLQKSTIRKYGYNLAPYMFLLLHVDELSIFSAYQASLPGEKKVDTERLKRDLCPRKPIEIKYFSQICNDMMNKKDRLGDILHIILRACALNFGAGPRGGAGDEEDRSITNEEPIIPSVDEHGLKVCKLRSPNTPRRLRKTLDAVKALLVSSCACTARDLDIFDDTNGVAMWKWIKILYHEVAQETTLKDSYRITLVPSSDGISVCGKLFNREYVRGFYFACKAQFDNLWGELNNCFYMPTVVDIASLILRNREVLFREPKRGIDEYLENDSFLQMIPVKYREIVLPKLRRDTNKMTAALKNKVTVAIDELTVPLMWMVHFAVGYPYRYPELQLLAFAGPQRNVYVDDTTRRIQLYTDYNKNGSSEPRLKTLDGLTSDYVFYFVTVLRQMQICALGNSYDAFNHDPWMDVVGFEDPDQVTNRDISRIVLYSYMFLNTAKGCLVEYATFRQYMRELPKNAPQKLNFREMRQGLIALGRHCVGSRFETDLYESATSELMANHSVQTGRNIYGVDSFSLTSVSGTTATLLQERASERWIQWLGLESDYHCSFSSTRNAEDVVAGEAASSDHDQKISRVTRKRPREPKSTNDILVAGQKLFGSSFEFRDLHQLRLCHEIYMADTPSVAVQAPPGYGKTELFHLPLIALASKGDVKYVSFLFVPYTVLLANCMIRLSRCGCLNVAPVRNFIEEGCDGVTDLYVGIYDDLASTNFTDRIAAWENIVECTFRTNNVKLGYLIVDEFHNFETEVYRQSQFGGITNLDFDAFEKAIFLSGTAPEAVADAALQRIGLTGLAKKSMDINELKRSEDLSRGLSSYPTRMFNLIKEKSEVPLGHVHKIWKKVESQPEEALKLLLALFEIEPESKAIVVASTTNEVEELACSWRKYFRVVWIHGKLGAAEKVSRTKEFVTDGSMRVLIGTKLVTEGIDIKQLMMVIMLDNRLNIIELIQGVGRLRDGGLCYLLSRKNSWAARNRKGELPPIKEGCITEQVREFYGLESKKGKKGQHVGCCGSRTDLSADTVELIERMDRLAEKQATASMSIIALPSSFQESNSSDRCRKYCSSDEDSDTCIHGSANASTNATTNSSTNATTTASTNVRTSATTTASINVRTSAITTESTNSSTNATTTASTNVRTSATTTASINVRTSATTTESTNSNTSATTTESTDSNTSATTTESTDSNTSATTTASTNSSTNATTTASTNSSTNATTTESTNASAKEDANKDGNAEDNRFHPVTDINKESYKRKGSQMVLLERKKLKAQFPNTSENMNVLQFLGFRSDEIKHLFLYGIDVYFCPEGVFTQYGLCKGCQKMFELCVCWAGQKVSYRRMAWEALAVERMLRNDEEYKEYLEDIEPYHGDPVGYLKYFSVKRGEIYSQIQRNYAWYLAITRRRETISVLDSTRGKQGSQVFRMSGRQIKELYYKVWSNLRESKTEVLQYFLNWDEKKCREEWEAKDDTVFVEALEKVGVFQRLRSMTSAGLQGPQYVKLQFSRHHRQLRSRYELSLGMHLRDQLALGVTPSKVPHWTAFLSMLIGLFYNKTFRQKLEYLLEQISEVWLLPHWLDLANVEVLAADNTRVPLYMLMVAVHKELDSDDVPDGRFDIILLCRDSSREVGE</sequence>
<protein>
    <recommendedName>
        <fullName>Y' element ATP-dependent helicase protein 1 copy 1</fullName>
        <ecNumber evidence="4">5.6.2.-</ecNumber>
    </recommendedName>
</protein>
<proteinExistence type="evidence at protein level"/>
<accession>P0CX20</accession>
<accession>D6VTG2</accession>
<accession>O94087</accession>
<accession>P24088</accession>
<accession>P24089</accession>
<accession>Q53WX0</accession>
<accession>Q99313</accession>
<name>YRF11_YEAST</name>